<protein>
    <recommendedName>
        <fullName>Putative uncharacterized membrane protein C622.02</fullName>
    </recommendedName>
</protein>
<organism>
    <name type="scientific">Schizosaccharomyces pombe (strain 972 / ATCC 24843)</name>
    <name type="common">Fission yeast</name>
    <dbReference type="NCBI Taxonomy" id="284812"/>
    <lineage>
        <taxon>Eukaryota</taxon>
        <taxon>Fungi</taxon>
        <taxon>Dikarya</taxon>
        <taxon>Ascomycota</taxon>
        <taxon>Taphrinomycotina</taxon>
        <taxon>Schizosaccharomycetes</taxon>
        <taxon>Schizosaccharomycetales</taxon>
        <taxon>Schizosaccharomycetaceae</taxon>
        <taxon>Schizosaccharomyces</taxon>
    </lineage>
</organism>
<gene>
    <name type="ORF">SPCC622.02</name>
</gene>
<sequence>MAANISKLEAIIDNTPNSSPDPEVSHKLWVSSLNKFQYTLPLLISNFAGLGIAFIYCLIAFIREMSHPSSRKDTMEHGLPIILCSTLMLVGNILYYFLSKHPLKVTVPEDLVQIPMQQMSSPAQEAP</sequence>
<reference key="1">
    <citation type="journal article" date="2002" name="Nature">
        <title>The genome sequence of Schizosaccharomyces pombe.</title>
        <authorList>
            <person name="Wood V."/>
            <person name="Gwilliam R."/>
            <person name="Rajandream M.A."/>
            <person name="Lyne M.H."/>
            <person name="Lyne R."/>
            <person name="Stewart A."/>
            <person name="Sgouros J.G."/>
            <person name="Peat N."/>
            <person name="Hayles J."/>
            <person name="Baker S.G."/>
            <person name="Basham D."/>
            <person name="Bowman S."/>
            <person name="Brooks K."/>
            <person name="Brown D."/>
            <person name="Brown S."/>
            <person name="Chillingworth T."/>
            <person name="Churcher C.M."/>
            <person name="Collins M."/>
            <person name="Connor R."/>
            <person name="Cronin A."/>
            <person name="Davis P."/>
            <person name="Feltwell T."/>
            <person name="Fraser A."/>
            <person name="Gentles S."/>
            <person name="Goble A."/>
            <person name="Hamlin N."/>
            <person name="Harris D.E."/>
            <person name="Hidalgo J."/>
            <person name="Hodgson G."/>
            <person name="Holroyd S."/>
            <person name="Hornsby T."/>
            <person name="Howarth S."/>
            <person name="Huckle E.J."/>
            <person name="Hunt S."/>
            <person name="Jagels K."/>
            <person name="James K.D."/>
            <person name="Jones L."/>
            <person name="Jones M."/>
            <person name="Leather S."/>
            <person name="McDonald S."/>
            <person name="McLean J."/>
            <person name="Mooney P."/>
            <person name="Moule S."/>
            <person name="Mungall K.L."/>
            <person name="Murphy L.D."/>
            <person name="Niblett D."/>
            <person name="Odell C."/>
            <person name="Oliver K."/>
            <person name="O'Neil S."/>
            <person name="Pearson D."/>
            <person name="Quail M.A."/>
            <person name="Rabbinowitsch E."/>
            <person name="Rutherford K.M."/>
            <person name="Rutter S."/>
            <person name="Saunders D."/>
            <person name="Seeger K."/>
            <person name="Sharp S."/>
            <person name="Skelton J."/>
            <person name="Simmonds M.N."/>
            <person name="Squares R."/>
            <person name="Squares S."/>
            <person name="Stevens K."/>
            <person name="Taylor K."/>
            <person name="Taylor R.G."/>
            <person name="Tivey A."/>
            <person name="Walsh S.V."/>
            <person name="Warren T."/>
            <person name="Whitehead S."/>
            <person name="Woodward J.R."/>
            <person name="Volckaert G."/>
            <person name="Aert R."/>
            <person name="Robben J."/>
            <person name="Grymonprez B."/>
            <person name="Weltjens I."/>
            <person name="Vanstreels E."/>
            <person name="Rieger M."/>
            <person name="Schaefer M."/>
            <person name="Mueller-Auer S."/>
            <person name="Gabel C."/>
            <person name="Fuchs M."/>
            <person name="Duesterhoeft A."/>
            <person name="Fritzc C."/>
            <person name="Holzer E."/>
            <person name="Moestl D."/>
            <person name="Hilbert H."/>
            <person name="Borzym K."/>
            <person name="Langer I."/>
            <person name="Beck A."/>
            <person name="Lehrach H."/>
            <person name="Reinhardt R."/>
            <person name="Pohl T.M."/>
            <person name="Eger P."/>
            <person name="Zimmermann W."/>
            <person name="Wedler H."/>
            <person name="Wambutt R."/>
            <person name="Purnelle B."/>
            <person name="Goffeau A."/>
            <person name="Cadieu E."/>
            <person name="Dreano S."/>
            <person name="Gloux S."/>
            <person name="Lelaure V."/>
            <person name="Mottier S."/>
            <person name="Galibert F."/>
            <person name="Aves S.J."/>
            <person name="Xiang Z."/>
            <person name="Hunt C."/>
            <person name="Moore K."/>
            <person name="Hurst S.M."/>
            <person name="Lucas M."/>
            <person name="Rochet M."/>
            <person name="Gaillardin C."/>
            <person name="Tallada V.A."/>
            <person name="Garzon A."/>
            <person name="Thode G."/>
            <person name="Daga R.R."/>
            <person name="Cruzado L."/>
            <person name="Jimenez J."/>
            <person name="Sanchez M."/>
            <person name="del Rey F."/>
            <person name="Benito J."/>
            <person name="Dominguez A."/>
            <person name="Revuelta J.L."/>
            <person name="Moreno S."/>
            <person name="Armstrong J."/>
            <person name="Forsburg S.L."/>
            <person name="Cerutti L."/>
            <person name="Lowe T."/>
            <person name="McCombie W.R."/>
            <person name="Paulsen I."/>
            <person name="Potashkin J."/>
            <person name="Shpakovski G.V."/>
            <person name="Ussery D."/>
            <person name="Barrell B.G."/>
            <person name="Nurse P."/>
        </authorList>
    </citation>
    <scope>NUCLEOTIDE SEQUENCE [LARGE SCALE GENOMIC DNA]</scope>
    <source>
        <strain>972 / ATCC 24843</strain>
    </source>
</reference>
<feature type="chain" id="PRO_0000303961" description="Putative uncharacterized membrane protein C622.02">
    <location>
        <begin position="1"/>
        <end position="127"/>
    </location>
</feature>
<feature type="transmembrane region" description="Helical" evidence="1">
    <location>
        <begin position="42"/>
        <end position="62"/>
    </location>
</feature>
<feature type="transmembrane region" description="Helical" evidence="1">
    <location>
        <begin position="78"/>
        <end position="98"/>
    </location>
</feature>
<proteinExistence type="predicted"/>
<evidence type="ECO:0000255" key="1"/>
<evidence type="ECO:0000305" key="2"/>
<dbReference type="EMBL" id="CU329672">
    <property type="protein sequence ID" value="CAA21858.1"/>
    <property type="molecule type" value="Genomic_DNA"/>
</dbReference>
<dbReference type="PIR" id="T41482">
    <property type="entry name" value="T41482"/>
</dbReference>
<dbReference type="RefSeq" id="NP_588174.1">
    <property type="nucleotide sequence ID" value="NM_001023164.2"/>
</dbReference>
<dbReference type="BioGRID" id="275344">
    <property type="interactions" value="8"/>
</dbReference>
<dbReference type="iPTMnet" id="O94592"/>
<dbReference type="PaxDb" id="4896-SPCC622.02.1"/>
<dbReference type="EnsemblFungi" id="SPCC622.02.1">
    <property type="protein sequence ID" value="SPCC622.02.1:pep"/>
    <property type="gene ID" value="SPCC622.02"/>
</dbReference>
<dbReference type="KEGG" id="spo:2538761"/>
<dbReference type="PomBase" id="SPCC622.02"/>
<dbReference type="VEuPathDB" id="FungiDB:SPCC622.02"/>
<dbReference type="HOGENOM" id="CLU_1971792_0_0_1"/>
<dbReference type="InParanoid" id="O94592"/>
<dbReference type="PRO" id="PR:O94592"/>
<dbReference type="Proteomes" id="UP000002485">
    <property type="component" value="Chromosome III"/>
</dbReference>
<dbReference type="GO" id="GO:0005783">
    <property type="term" value="C:endoplasmic reticulum"/>
    <property type="evidence" value="ECO:0007005"/>
    <property type="project" value="PomBase"/>
</dbReference>
<dbReference type="GO" id="GO:0016020">
    <property type="term" value="C:membrane"/>
    <property type="evidence" value="ECO:0007669"/>
    <property type="project" value="UniProtKB-SubCell"/>
</dbReference>
<keyword id="KW-0472">Membrane</keyword>
<keyword id="KW-1185">Reference proteome</keyword>
<keyword id="KW-0812">Transmembrane</keyword>
<keyword id="KW-1133">Transmembrane helix</keyword>
<comment type="subcellular location">
    <subcellularLocation>
        <location evidence="2">Membrane</location>
        <topology evidence="2">Multi-pass membrane protein</topology>
    </subcellularLocation>
</comment>
<name>YC82_SCHPO</name>
<accession>O94592</accession>